<accession>Q7NMB9</accession>
<gene>
    <name evidence="1" type="primary">coaD</name>
    <name type="ordered locus">glr0847</name>
</gene>
<keyword id="KW-0067">ATP-binding</keyword>
<keyword id="KW-0173">Coenzyme A biosynthesis</keyword>
<keyword id="KW-0963">Cytoplasm</keyword>
<keyword id="KW-0460">Magnesium</keyword>
<keyword id="KW-0547">Nucleotide-binding</keyword>
<keyword id="KW-0548">Nucleotidyltransferase</keyword>
<keyword id="KW-1185">Reference proteome</keyword>
<keyword id="KW-0808">Transferase</keyword>
<proteinExistence type="inferred from homology"/>
<name>COAD_GLOVI</name>
<sequence length="161" mass="17872">MIALYPGSFDPLTYGHLDIIERAARLFDRVVVAVLRNPAKVPLFTVEERLSQIQKAVRHLDNVEVEAFHGLTVTVARRLDARVLLRGLRAVSDFEAELQMAQTNRTLATEIETLFLSTSTEHSFLSSSLVKNIAAAGGPVSHMVPEHIEKELRTRFAGAPL</sequence>
<protein>
    <recommendedName>
        <fullName evidence="1">Phosphopantetheine adenylyltransferase</fullName>
        <ecNumber evidence="1">2.7.7.3</ecNumber>
    </recommendedName>
    <alternativeName>
        <fullName evidence="1">Dephospho-CoA pyrophosphorylase</fullName>
    </alternativeName>
    <alternativeName>
        <fullName evidence="1">Pantetheine-phosphate adenylyltransferase</fullName>
        <shortName evidence="1">PPAT</shortName>
    </alternativeName>
</protein>
<feature type="chain" id="PRO_0000156213" description="Phosphopantetheine adenylyltransferase">
    <location>
        <begin position="1"/>
        <end position="161"/>
    </location>
</feature>
<feature type="binding site" evidence="1">
    <location>
        <begin position="8"/>
        <end position="9"/>
    </location>
    <ligand>
        <name>ATP</name>
        <dbReference type="ChEBI" id="CHEBI:30616"/>
    </ligand>
</feature>
<feature type="binding site" evidence="1">
    <location>
        <position position="8"/>
    </location>
    <ligand>
        <name>substrate</name>
    </ligand>
</feature>
<feature type="binding site" evidence="1">
    <location>
        <position position="16"/>
    </location>
    <ligand>
        <name>ATP</name>
        <dbReference type="ChEBI" id="CHEBI:30616"/>
    </ligand>
</feature>
<feature type="binding site" evidence="1">
    <location>
        <position position="40"/>
    </location>
    <ligand>
        <name>substrate</name>
    </ligand>
</feature>
<feature type="binding site" evidence="1">
    <location>
        <position position="72"/>
    </location>
    <ligand>
        <name>substrate</name>
    </ligand>
</feature>
<feature type="binding site" evidence="1">
    <location>
        <position position="86"/>
    </location>
    <ligand>
        <name>substrate</name>
    </ligand>
</feature>
<feature type="binding site" evidence="1">
    <location>
        <begin position="87"/>
        <end position="89"/>
    </location>
    <ligand>
        <name>ATP</name>
        <dbReference type="ChEBI" id="CHEBI:30616"/>
    </ligand>
</feature>
<feature type="binding site" evidence="1">
    <location>
        <position position="97"/>
    </location>
    <ligand>
        <name>ATP</name>
        <dbReference type="ChEBI" id="CHEBI:30616"/>
    </ligand>
</feature>
<feature type="binding site" evidence="1">
    <location>
        <begin position="122"/>
        <end position="128"/>
    </location>
    <ligand>
        <name>ATP</name>
        <dbReference type="ChEBI" id="CHEBI:30616"/>
    </ligand>
</feature>
<feature type="site" description="Transition state stabilizer" evidence="1">
    <location>
        <position position="16"/>
    </location>
</feature>
<dbReference type="EC" id="2.7.7.3" evidence="1"/>
<dbReference type="EMBL" id="BA000045">
    <property type="protein sequence ID" value="BAC88788.1"/>
    <property type="molecule type" value="Genomic_DNA"/>
</dbReference>
<dbReference type="RefSeq" id="NP_923793.1">
    <property type="nucleotide sequence ID" value="NC_005125.1"/>
</dbReference>
<dbReference type="RefSeq" id="WP_011140849.1">
    <property type="nucleotide sequence ID" value="NC_005125.1"/>
</dbReference>
<dbReference type="SMR" id="Q7NMB9"/>
<dbReference type="FunCoup" id="Q7NMB9">
    <property type="interactions" value="160"/>
</dbReference>
<dbReference type="STRING" id="251221.gene:10758325"/>
<dbReference type="EnsemblBacteria" id="BAC88788">
    <property type="protein sequence ID" value="BAC88788"/>
    <property type="gene ID" value="BAC88788"/>
</dbReference>
<dbReference type="KEGG" id="gvi:glr0847"/>
<dbReference type="PATRIC" id="fig|251221.4.peg.864"/>
<dbReference type="eggNOG" id="COG0669">
    <property type="taxonomic scope" value="Bacteria"/>
</dbReference>
<dbReference type="HOGENOM" id="CLU_100149_0_1_3"/>
<dbReference type="InParanoid" id="Q7NMB9"/>
<dbReference type="OrthoDB" id="9806661at2"/>
<dbReference type="PhylomeDB" id="Q7NMB9"/>
<dbReference type="UniPathway" id="UPA00241">
    <property type="reaction ID" value="UER00355"/>
</dbReference>
<dbReference type="Proteomes" id="UP000000557">
    <property type="component" value="Chromosome"/>
</dbReference>
<dbReference type="GO" id="GO:0005737">
    <property type="term" value="C:cytoplasm"/>
    <property type="evidence" value="ECO:0007669"/>
    <property type="project" value="UniProtKB-SubCell"/>
</dbReference>
<dbReference type="GO" id="GO:0005524">
    <property type="term" value="F:ATP binding"/>
    <property type="evidence" value="ECO:0007669"/>
    <property type="project" value="UniProtKB-KW"/>
</dbReference>
<dbReference type="GO" id="GO:0004595">
    <property type="term" value="F:pantetheine-phosphate adenylyltransferase activity"/>
    <property type="evidence" value="ECO:0000318"/>
    <property type="project" value="GO_Central"/>
</dbReference>
<dbReference type="GO" id="GO:0015937">
    <property type="term" value="P:coenzyme A biosynthetic process"/>
    <property type="evidence" value="ECO:0000318"/>
    <property type="project" value="GO_Central"/>
</dbReference>
<dbReference type="CDD" id="cd02163">
    <property type="entry name" value="PPAT"/>
    <property type="match status" value="1"/>
</dbReference>
<dbReference type="Gene3D" id="3.40.50.620">
    <property type="entry name" value="HUPs"/>
    <property type="match status" value="1"/>
</dbReference>
<dbReference type="HAMAP" id="MF_00151">
    <property type="entry name" value="PPAT_bact"/>
    <property type="match status" value="1"/>
</dbReference>
<dbReference type="InterPro" id="IPR004821">
    <property type="entry name" value="Cyt_trans-like"/>
</dbReference>
<dbReference type="InterPro" id="IPR001980">
    <property type="entry name" value="PPAT"/>
</dbReference>
<dbReference type="InterPro" id="IPR014729">
    <property type="entry name" value="Rossmann-like_a/b/a_fold"/>
</dbReference>
<dbReference type="NCBIfam" id="TIGR01510">
    <property type="entry name" value="coaD_prev_kdtB"/>
    <property type="match status" value="1"/>
</dbReference>
<dbReference type="NCBIfam" id="TIGR00125">
    <property type="entry name" value="cyt_tran_rel"/>
    <property type="match status" value="1"/>
</dbReference>
<dbReference type="PANTHER" id="PTHR21342">
    <property type="entry name" value="PHOSPHOPANTETHEINE ADENYLYLTRANSFERASE"/>
    <property type="match status" value="1"/>
</dbReference>
<dbReference type="PANTHER" id="PTHR21342:SF1">
    <property type="entry name" value="PHOSPHOPANTETHEINE ADENYLYLTRANSFERASE"/>
    <property type="match status" value="1"/>
</dbReference>
<dbReference type="Pfam" id="PF01467">
    <property type="entry name" value="CTP_transf_like"/>
    <property type="match status" value="1"/>
</dbReference>
<dbReference type="PRINTS" id="PR01020">
    <property type="entry name" value="LPSBIOSNTHSS"/>
</dbReference>
<dbReference type="SUPFAM" id="SSF52374">
    <property type="entry name" value="Nucleotidylyl transferase"/>
    <property type="match status" value="1"/>
</dbReference>
<comment type="function">
    <text evidence="1">Reversibly transfers an adenylyl group from ATP to 4'-phosphopantetheine, yielding dephospho-CoA (dPCoA) and pyrophosphate.</text>
</comment>
<comment type="catalytic activity">
    <reaction evidence="1">
        <text>(R)-4'-phosphopantetheine + ATP + H(+) = 3'-dephospho-CoA + diphosphate</text>
        <dbReference type="Rhea" id="RHEA:19801"/>
        <dbReference type="ChEBI" id="CHEBI:15378"/>
        <dbReference type="ChEBI" id="CHEBI:30616"/>
        <dbReference type="ChEBI" id="CHEBI:33019"/>
        <dbReference type="ChEBI" id="CHEBI:57328"/>
        <dbReference type="ChEBI" id="CHEBI:61723"/>
        <dbReference type="EC" id="2.7.7.3"/>
    </reaction>
</comment>
<comment type="cofactor">
    <cofactor evidence="1">
        <name>Mg(2+)</name>
        <dbReference type="ChEBI" id="CHEBI:18420"/>
    </cofactor>
</comment>
<comment type="pathway">
    <text evidence="1">Cofactor biosynthesis; coenzyme A biosynthesis; CoA from (R)-pantothenate: step 4/5.</text>
</comment>
<comment type="subunit">
    <text evidence="1">Homohexamer.</text>
</comment>
<comment type="subcellular location">
    <subcellularLocation>
        <location evidence="1">Cytoplasm</location>
    </subcellularLocation>
</comment>
<comment type="similarity">
    <text evidence="1">Belongs to the bacterial CoaD family.</text>
</comment>
<organism>
    <name type="scientific">Gloeobacter violaceus (strain ATCC 29082 / PCC 7421)</name>
    <dbReference type="NCBI Taxonomy" id="251221"/>
    <lineage>
        <taxon>Bacteria</taxon>
        <taxon>Bacillati</taxon>
        <taxon>Cyanobacteriota</taxon>
        <taxon>Cyanophyceae</taxon>
        <taxon>Gloeobacterales</taxon>
        <taxon>Gloeobacteraceae</taxon>
        <taxon>Gloeobacter</taxon>
    </lineage>
</organism>
<reference key="1">
    <citation type="journal article" date="2003" name="DNA Res.">
        <title>Complete genome structure of Gloeobacter violaceus PCC 7421, a cyanobacterium that lacks thylakoids.</title>
        <authorList>
            <person name="Nakamura Y."/>
            <person name="Kaneko T."/>
            <person name="Sato S."/>
            <person name="Mimuro M."/>
            <person name="Miyashita H."/>
            <person name="Tsuchiya T."/>
            <person name="Sasamoto S."/>
            <person name="Watanabe A."/>
            <person name="Kawashima K."/>
            <person name="Kishida Y."/>
            <person name="Kiyokawa C."/>
            <person name="Kohara M."/>
            <person name="Matsumoto M."/>
            <person name="Matsuno A."/>
            <person name="Nakazaki N."/>
            <person name="Shimpo S."/>
            <person name="Takeuchi C."/>
            <person name="Yamada M."/>
            <person name="Tabata S."/>
        </authorList>
    </citation>
    <scope>NUCLEOTIDE SEQUENCE [LARGE SCALE GENOMIC DNA]</scope>
    <source>
        <strain>ATCC 29082 / PCC 7421</strain>
    </source>
</reference>
<evidence type="ECO:0000255" key="1">
    <source>
        <dbReference type="HAMAP-Rule" id="MF_00151"/>
    </source>
</evidence>